<reference key="1">
    <citation type="journal article" date="2006" name="Proc. Natl. Acad. Sci. U.S.A.">
        <title>Evolution of sensory complexity recorded in a myxobacterial genome.</title>
        <authorList>
            <person name="Goldman B.S."/>
            <person name="Nierman W.C."/>
            <person name="Kaiser D."/>
            <person name="Slater S.C."/>
            <person name="Durkin A.S."/>
            <person name="Eisen J.A."/>
            <person name="Ronning C.M."/>
            <person name="Barbazuk W.B."/>
            <person name="Blanchard M."/>
            <person name="Field C."/>
            <person name="Halling C."/>
            <person name="Hinkle G."/>
            <person name="Iartchuk O."/>
            <person name="Kim H.S."/>
            <person name="Mackenzie C."/>
            <person name="Madupu R."/>
            <person name="Miller N."/>
            <person name="Shvartsbeyn A."/>
            <person name="Sullivan S.A."/>
            <person name="Vaudin M."/>
            <person name="Wiegand R."/>
            <person name="Kaplan H.B."/>
        </authorList>
    </citation>
    <scope>NUCLEOTIDE SEQUENCE [LARGE SCALE GENOMIC DNA]</scope>
    <source>
        <strain>DK1622</strain>
    </source>
</reference>
<sequence length="139" mass="15511">MLQPARTKYRKMHKGRMPGSAHRGSDMTYGEYGLMSLQPGWITSRQIEAARIAMTRHVKRGGKIWIRIFPDKPITKKPAETRMGTGKGGVEYYVAVVKPGRILYEMEGMTPEVATGALKLAQAKLPVLTKIVKRADLSL</sequence>
<gene>
    <name evidence="1" type="primary">rplP</name>
    <name type="ordered locus">MXAN_3306</name>
</gene>
<dbReference type="EMBL" id="CP000113">
    <property type="protein sequence ID" value="ABF88224.1"/>
    <property type="molecule type" value="Genomic_DNA"/>
</dbReference>
<dbReference type="RefSeq" id="WP_002633601.1">
    <property type="nucleotide sequence ID" value="NC_008095.1"/>
</dbReference>
<dbReference type="SMR" id="Q1D768"/>
<dbReference type="STRING" id="246197.MXAN_3306"/>
<dbReference type="EnsemblBacteria" id="ABF88224">
    <property type="protein sequence ID" value="ABF88224"/>
    <property type="gene ID" value="MXAN_3306"/>
</dbReference>
<dbReference type="GeneID" id="41360659"/>
<dbReference type="KEGG" id="mxa:MXAN_3306"/>
<dbReference type="eggNOG" id="COG0197">
    <property type="taxonomic scope" value="Bacteria"/>
</dbReference>
<dbReference type="HOGENOM" id="CLU_078858_2_1_7"/>
<dbReference type="OrthoDB" id="9802589at2"/>
<dbReference type="Proteomes" id="UP000002402">
    <property type="component" value="Chromosome"/>
</dbReference>
<dbReference type="GO" id="GO:0022625">
    <property type="term" value="C:cytosolic large ribosomal subunit"/>
    <property type="evidence" value="ECO:0007669"/>
    <property type="project" value="TreeGrafter"/>
</dbReference>
<dbReference type="GO" id="GO:0019843">
    <property type="term" value="F:rRNA binding"/>
    <property type="evidence" value="ECO:0007669"/>
    <property type="project" value="UniProtKB-UniRule"/>
</dbReference>
<dbReference type="GO" id="GO:0003735">
    <property type="term" value="F:structural constituent of ribosome"/>
    <property type="evidence" value="ECO:0007669"/>
    <property type="project" value="InterPro"/>
</dbReference>
<dbReference type="GO" id="GO:0000049">
    <property type="term" value="F:tRNA binding"/>
    <property type="evidence" value="ECO:0007669"/>
    <property type="project" value="UniProtKB-KW"/>
</dbReference>
<dbReference type="GO" id="GO:0006412">
    <property type="term" value="P:translation"/>
    <property type="evidence" value="ECO:0007669"/>
    <property type="project" value="UniProtKB-UniRule"/>
</dbReference>
<dbReference type="CDD" id="cd01433">
    <property type="entry name" value="Ribosomal_L16_L10e"/>
    <property type="match status" value="1"/>
</dbReference>
<dbReference type="FunFam" id="3.90.1170.10:FF:000001">
    <property type="entry name" value="50S ribosomal protein L16"/>
    <property type="match status" value="1"/>
</dbReference>
<dbReference type="Gene3D" id="3.90.1170.10">
    <property type="entry name" value="Ribosomal protein L10e/L16"/>
    <property type="match status" value="1"/>
</dbReference>
<dbReference type="HAMAP" id="MF_01342">
    <property type="entry name" value="Ribosomal_uL16"/>
    <property type="match status" value="1"/>
</dbReference>
<dbReference type="InterPro" id="IPR047873">
    <property type="entry name" value="Ribosomal_uL16"/>
</dbReference>
<dbReference type="InterPro" id="IPR000114">
    <property type="entry name" value="Ribosomal_uL16_bact-type"/>
</dbReference>
<dbReference type="InterPro" id="IPR020798">
    <property type="entry name" value="Ribosomal_uL16_CS"/>
</dbReference>
<dbReference type="InterPro" id="IPR016180">
    <property type="entry name" value="Ribosomal_uL16_dom"/>
</dbReference>
<dbReference type="InterPro" id="IPR036920">
    <property type="entry name" value="Ribosomal_uL16_sf"/>
</dbReference>
<dbReference type="NCBIfam" id="TIGR01164">
    <property type="entry name" value="rplP_bact"/>
    <property type="match status" value="1"/>
</dbReference>
<dbReference type="PANTHER" id="PTHR12220">
    <property type="entry name" value="50S/60S RIBOSOMAL PROTEIN L16"/>
    <property type="match status" value="1"/>
</dbReference>
<dbReference type="PANTHER" id="PTHR12220:SF13">
    <property type="entry name" value="LARGE RIBOSOMAL SUBUNIT PROTEIN UL16M"/>
    <property type="match status" value="1"/>
</dbReference>
<dbReference type="Pfam" id="PF00252">
    <property type="entry name" value="Ribosomal_L16"/>
    <property type="match status" value="1"/>
</dbReference>
<dbReference type="PRINTS" id="PR00060">
    <property type="entry name" value="RIBOSOMALL16"/>
</dbReference>
<dbReference type="SUPFAM" id="SSF54686">
    <property type="entry name" value="Ribosomal protein L16p/L10e"/>
    <property type="match status" value="1"/>
</dbReference>
<dbReference type="PROSITE" id="PS00586">
    <property type="entry name" value="RIBOSOMAL_L16_1"/>
    <property type="match status" value="1"/>
</dbReference>
<evidence type="ECO:0000255" key="1">
    <source>
        <dbReference type="HAMAP-Rule" id="MF_01342"/>
    </source>
</evidence>
<evidence type="ECO:0000256" key="2">
    <source>
        <dbReference type="SAM" id="MobiDB-lite"/>
    </source>
</evidence>
<evidence type="ECO:0000305" key="3"/>
<comment type="function">
    <text evidence="1">Binds 23S rRNA and is also seen to make contacts with the A and possibly P site tRNAs.</text>
</comment>
<comment type="subunit">
    <text evidence="1">Part of the 50S ribosomal subunit.</text>
</comment>
<comment type="similarity">
    <text evidence="1">Belongs to the universal ribosomal protein uL16 family.</text>
</comment>
<feature type="chain" id="PRO_0000251648" description="Large ribosomal subunit protein uL16">
    <location>
        <begin position="1"/>
        <end position="139"/>
    </location>
</feature>
<feature type="region of interest" description="Disordered" evidence="2">
    <location>
        <begin position="1"/>
        <end position="23"/>
    </location>
</feature>
<feature type="compositionally biased region" description="Basic residues" evidence="2">
    <location>
        <begin position="7"/>
        <end position="16"/>
    </location>
</feature>
<organism>
    <name type="scientific">Myxococcus xanthus (strain DK1622)</name>
    <dbReference type="NCBI Taxonomy" id="246197"/>
    <lineage>
        <taxon>Bacteria</taxon>
        <taxon>Pseudomonadati</taxon>
        <taxon>Myxococcota</taxon>
        <taxon>Myxococcia</taxon>
        <taxon>Myxococcales</taxon>
        <taxon>Cystobacterineae</taxon>
        <taxon>Myxococcaceae</taxon>
        <taxon>Myxococcus</taxon>
    </lineage>
</organism>
<protein>
    <recommendedName>
        <fullName evidence="1">Large ribosomal subunit protein uL16</fullName>
    </recommendedName>
    <alternativeName>
        <fullName evidence="3">50S ribosomal protein L16</fullName>
    </alternativeName>
</protein>
<keyword id="KW-1185">Reference proteome</keyword>
<keyword id="KW-0687">Ribonucleoprotein</keyword>
<keyword id="KW-0689">Ribosomal protein</keyword>
<keyword id="KW-0694">RNA-binding</keyword>
<keyword id="KW-0699">rRNA-binding</keyword>
<keyword id="KW-0820">tRNA-binding</keyword>
<proteinExistence type="inferred from homology"/>
<name>RL16_MYXXD</name>
<accession>Q1D768</accession>